<feature type="chain" id="PRO_1000132483" description="Probable glycine dehydrogenase (decarboxylating) subunit 1">
    <location>
        <begin position="1"/>
        <end position="448"/>
    </location>
</feature>
<dbReference type="EC" id="1.4.4.2" evidence="1"/>
<dbReference type="EMBL" id="CP000817">
    <property type="protein sequence ID" value="ACA41094.1"/>
    <property type="molecule type" value="Genomic_DNA"/>
</dbReference>
<dbReference type="RefSeq" id="WP_012295153.1">
    <property type="nucleotide sequence ID" value="NC_010382.1"/>
</dbReference>
<dbReference type="SMR" id="B1HSN6"/>
<dbReference type="EnsemblBacteria" id="ACA41094">
    <property type="protein sequence ID" value="ACA41094"/>
    <property type="gene ID" value="Bsph_3608"/>
</dbReference>
<dbReference type="KEGG" id="lsp:Bsph_3608"/>
<dbReference type="HOGENOM" id="CLU_004620_0_2_9"/>
<dbReference type="Proteomes" id="UP000002164">
    <property type="component" value="Chromosome"/>
</dbReference>
<dbReference type="GO" id="GO:0004375">
    <property type="term" value="F:glycine dehydrogenase (decarboxylating) activity"/>
    <property type="evidence" value="ECO:0007669"/>
    <property type="project" value="UniProtKB-EC"/>
</dbReference>
<dbReference type="GO" id="GO:0019464">
    <property type="term" value="P:glycine decarboxylation via glycine cleavage system"/>
    <property type="evidence" value="ECO:0007669"/>
    <property type="project" value="UniProtKB-UniRule"/>
</dbReference>
<dbReference type="GO" id="GO:0009116">
    <property type="term" value="P:nucleoside metabolic process"/>
    <property type="evidence" value="ECO:0007669"/>
    <property type="project" value="InterPro"/>
</dbReference>
<dbReference type="CDD" id="cd00613">
    <property type="entry name" value="GDC-P"/>
    <property type="match status" value="1"/>
</dbReference>
<dbReference type="FunFam" id="3.40.640.10:FF:000113">
    <property type="entry name" value="Probable glycine dehydrogenase (decarboxylating) subunit 1"/>
    <property type="match status" value="1"/>
</dbReference>
<dbReference type="Gene3D" id="3.90.1150.10">
    <property type="entry name" value="Aspartate Aminotransferase, domain 1"/>
    <property type="match status" value="1"/>
</dbReference>
<dbReference type="Gene3D" id="3.40.640.10">
    <property type="entry name" value="Type I PLP-dependent aspartate aminotransferase-like (Major domain)"/>
    <property type="match status" value="1"/>
</dbReference>
<dbReference type="HAMAP" id="MF_00712">
    <property type="entry name" value="GcvPA"/>
    <property type="match status" value="1"/>
</dbReference>
<dbReference type="InterPro" id="IPR023010">
    <property type="entry name" value="GcvPA"/>
</dbReference>
<dbReference type="InterPro" id="IPR049315">
    <property type="entry name" value="GDC-P_N"/>
</dbReference>
<dbReference type="InterPro" id="IPR020581">
    <property type="entry name" value="GDC_P"/>
</dbReference>
<dbReference type="InterPro" id="IPR015424">
    <property type="entry name" value="PyrdxlP-dep_Trfase"/>
</dbReference>
<dbReference type="InterPro" id="IPR015421">
    <property type="entry name" value="PyrdxlP-dep_Trfase_major"/>
</dbReference>
<dbReference type="InterPro" id="IPR015422">
    <property type="entry name" value="PyrdxlP-dep_Trfase_small"/>
</dbReference>
<dbReference type="NCBIfam" id="NF001696">
    <property type="entry name" value="PRK00451.1"/>
    <property type="match status" value="1"/>
</dbReference>
<dbReference type="PANTHER" id="PTHR42806">
    <property type="entry name" value="GLYCINE CLEAVAGE SYSTEM P-PROTEIN"/>
    <property type="match status" value="1"/>
</dbReference>
<dbReference type="PANTHER" id="PTHR42806:SF1">
    <property type="entry name" value="GLYCINE DEHYDROGENASE (DECARBOXYLATING)"/>
    <property type="match status" value="1"/>
</dbReference>
<dbReference type="Pfam" id="PF02347">
    <property type="entry name" value="GDC-P"/>
    <property type="match status" value="1"/>
</dbReference>
<dbReference type="PIRSF" id="PIRSF006815">
    <property type="entry name" value="GcvPA"/>
    <property type="match status" value="1"/>
</dbReference>
<dbReference type="SUPFAM" id="SSF53383">
    <property type="entry name" value="PLP-dependent transferases"/>
    <property type="match status" value="1"/>
</dbReference>
<keyword id="KW-0560">Oxidoreductase</keyword>
<gene>
    <name evidence="1" type="primary">gcvPA</name>
    <name type="ordered locus">Bsph_3608</name>
</gene>
<name>GCSPA_LYSSC</name>
<evidence type="ECO:0000255" key="1">
    <source>
        <dbReference type="HAMAP-Rule" id="MF_00712"/>
    </source>
</evidence>
<organism>
    <name type="scientific">Lysinibacillus sphaericus (strain C3-41)</name>
    <dbReference type="NCBI Taxonomy" id="444177"/>
    <lineage>
        <taxon>Bacteria</taxon>
        <taxon>Bacillati</taxon>
        <taxon>Bacillota</taxon>
        <taxon>Bacilli</taxon>
        <taxon>Bacillales</taxon>
        <taxon>Bacillaceae</taxon>
        <taxon>Lysinibacillus</taxon>
    </lineage>
</organism>
<accession>B1HSN6</accession>
<reference key="1">
    <citation type="journal article" date="2008" name="J. Bacteriol.">
        <title>Complete genome sequence of the mosquitocidal bacterium Bacillus sphaericus C3-41 and comparison with those of closely related Bacillus species.</title>
        <authorList>
            <person name="Hu X."/>
            <person name="Fan W."/>
            <person name="Han B."/>
            <person name="Liu H."/>
            <person name="Zheng D."/>
            <person name="Li Q."/>
            <person name="Dong W."/>
            <person name="Yan J."/>
            <person name="Gao M."/>
            <person name="Berry C."/>
            <person name="Yuan Z."/>
        </authorList>
    </citation>
    <scope>NUCLEOTIDE SEQUENCE [LARGE SCALE GENOMIC DNA]</scope>
    <source>
        <strain>C3-41</strain>
    </source>
</reference>
<sequence length="448" mass="48697">MKHRYLPMTEQDQKEMLDVIGVSSVDELFEDIPEKVRFKGLYDIKAAKSESALLKELTALAAKNKDTNANVSFLGAGVYNHYKPVIVDHVISRSEFYTAYTPYQPEISQGELQAIFEFQTMIAELTGMDLANSSMYDGGTALAEAGMLAAGHTRRKKILVSETVHPEYRDVVATYAYGQSIEIVTIPHKDGVTDIAALKELIDDNTAAVIAQYPNFFGQVEDIQVIGDIAHEAKSLFVVSSNPLALGILTPPGKLGADICVGDAQVFGISEAFGGPHCGFFAVTTKLMRKVPGRLVGETVDGEGRRGYVLTLQAREQHIRRDKATSNICSNQALLALAASVAMTALGKQGIREMATQNIAKTRYAKNAFEAAGFTVAFQGAHFNEIVVKTNKCVKEINKGLIEKGIIGGYPLGQNYDSLKHHVLIAVTELRTKEEIDALVAEMGALHA</sequence>
<comment type="function">
    <text evidence="1">The glycine cleavage system catalyzes the degradation of glycine. The P protein binds the alpha-amino group of glycine through its pyridoxal phosphate cofactor; CO(2) is released and the remaining methylamine moiety is then transferred to the lipoamide cofactor of the H protein.</text>
</comment>
<comment type="catalytic activity">
    <reaction evidence="1">
        <text>N(6)-[(R)-lipoyl]-L-lysyl-[glycine-cleavage complex H protein] + glycine + H(+) = N(6)-[(R)-S(8)-aminomethyldihydrolipoyl]-L-lysyl-[glycine-cleavage complex H protein] + CO2</text>
        <dbReference type="Rhea" id="RHEA:24304"/>
        <dbReference type="Rhea" id="RHEA-COMP:10494"/>
        <dbReference type="Rhea" id="RHEA-COMP:10495"/>
        <dbReference type="ChEBI" id="CHEBI:15378"/>
        <dbReference type="ChEBI" id="CHEBI:16526"/>
        <dbReference type="ChEBI" id="CHEBI:57305"/>
        <dbReference type="ChEBI" id="CHEBI:83099"/>
        <dbReference type="ChEBI" id="CHEBI:83143"/>
        <dbReference type="EC" id="1.4.4.2"/>
    </reaction>
</comment>
<comment type="subunit">
    <text evidence="1">The glycine cleavage system is composed of four proteins: P, T, L and H. In this organism, the P 'protein' is a heterodimer of two subunits.</text>
</comment>
<comment type="similarity">
    <text evidence="1">Belongs to the GcvP family. N-terminal subunit subfamily.</text>
</comment>
<protein>
    <recommendedName>
        <fullName evidence="1">Probable glycine dehydrogenase (decarboxylating) subunit 1</fullName>
        <ecNumber evidence="1">1.4.4.2</ecNumber>
    </recommendedName>
    <alternativeName>
        <fullName evidence="1">Glycine cleavage system P-protein subunit 1</fullName>
    </alternativeName>
    <alternativeName>
        <fullName evidence="1">Glycine decarboxylase subunit 1</fullName>
    </alternativeName>
    <alternativeName>
        <fullName evidence="1">Glycine dehydrogenase (aminomethyl-transferring) subunit 1</fullName>
    </alternativeName>
</protein>
<proteinExistence type="inferred from homology"/>